<reference key="1">
    <citation type="journal article" date="2006" name="PLoS Genet.">
        <title>Who ate whom? Adaptive Helicobacter genomic changes that accompanied a host jump from early humans to large felines.</title>
        <authorList>
            <person name="Eppinger M."/>
            <person name="Baar C."/>
            <person name="Linz B."/>
            <person name="Raddatz G."/>
            <person name="Lanz C."/>
            <person name="Keller H."/>
            <person name="Morelli G."/>
            <person name="Gressmann H."/>
            <person name="Achtman M."/>
            <person name="Schuster S.C."/>
        </authorList>
    </citation>
    <scope>NUCLEOTIDE SEQUENCE [LARGE SCALE GENOMIC DNA]</scope>
    <source>
        <strain>Sheeba</strain>
    </source>
</reference>
<dbReference type="EC" id="2.7.2.1" evidence="1"/>
<dbReference type="EMBL" id="AM260522">
    <property type="protein sequence ID" value="CAK00033.1"/>
    <property type="molecule type" value="Genomic_DNA"/>
</dbReference>
<dbReference type="RefSeq" id="WP_011578124.1">
    <property type="nucleotide sequence ID" value="NC_008229.1"/>
</dbReference>
<dbReference type="SMR" id="Q17WE3"/>
<dbReference type="STRING" id="382638.Hac_1289"/>
<dbReference type="GeneID" id="31758611"/>
<dbReference type="KEGG" id="hac:Hac_1289"/>
<dbReference type="eggNOG" id="COG0282">
    <property type="taxonomic scope" value="Bacteria"/>
</dbReference>
<dbReference type="HOGENOM" id="CLU_020352_0_1_7"/>
<dbReference type="OrthoDB" id="9802453at2"/>
<dbReference type="BioCyc" id="HACI382638:HAC_RS05515-MONOMER"/>
<dbReference type="UniPathway" id="UPA00340">
    <property type="reaction ID" value="UER00458"/>
</dbReference>
<dbReference type="Proteomes" id="UP000000775">
    <property type="component" value="Chromosome"/>
</dbReference>
<dbReference type="GO" id="GO:0005737">
    <property type="term" value="C:cytoplasm"/>
    <property type="evidence" value="ECO:0007669"/>
    <property type="project" value="UniProtKB-SubCell"/>
</dbReference>
<dbReference type="GO" id="GO:0008776">
    <property type="term" value="F:acetate kinase activity"/>
    <property type="evidence" value="ECO:0007669"/>
    <property type="project" value="UniProtKB-UniRule"/>
</dbReference>
<dbReference type="GO" id="GO:0005524">
    <property type="term" value="F:ATP binding"/>
    <property type="evidence" value="ECO:0007669"/>
    <property type="project" value="UniProtKB-KW"/>
</dbReference>
<dbReference type="GO" id="GO:0000287">
    <property type="term" value="F:magnesium ion binding"/>
    <property type="evidence" value="ECO:0007669"/>
    <property type="project" value="UniProtKB-UniRule"/>
</dbReference>
<dbReference type="GO" id="GO:0006083">
    <property type="term" value="P:acetate metabolic process"/>
    <property type="evidence" value="ECO:0007669"/>
    <property type="project" value="TreeGrafter"/>
</dbReference>
<dbReference type="GO" id="GO:0006085">
    <property type="term" value="P:acetyl-CoA biosynthetic process"/>
    <property type="evidence" value="ECO:0007669"/>
    <property type="project" value="UniProtKB-UniRule"/>
</dbReference>
<dbReference type="CDD" id="cd24010">
    <property type="entry name" value="ASKHA_NBD_AcK_PK"/>
    <property type="match status" value="1"/>
</dbReference>
<dbReference type="Gene3D" id="3.30.420.40">
    <property type="match status" value="2"/>
</dbReference>
<dbReference type="HAMAP" id="MF_00020">
    <property type="entry name" value="Acetate_kinase"/>
    <property type="match status" value="1"/>
</dbReference>
<dbReference type="InterPro" id="IPR004372">
    <property type="entry name" value="Ac/propionate_kinase"/>
</dbReference>
<dbReference type="InterPro" id="IPR000890">
    <property type="entry name" value="Aliphatic_acid_kin_short-chain"/>
</dbReference>
<dbReference type="InterPro" id="IPR023865">
    <property type="entry name" value="Aliphatic_acid_kinase_CS"/>
</dbReference>
<dbReference type="InterPro" id="IPR043129">
    <property type="entry name" value="ATPase_NBD"/>
</dbReference>
<dbReference type="NCBIfam" id="TIGR00016">
    <property type="entry name" value="ackA"/>
    <property type="match status" value="1"/>
</dbReference>
<dbReference type="PANTHER" id="PTHR21060">
    <property type="entry name" value="ACETATE KINASE"/>
    <property type="match status" value="1"/>
</dbReference>
<dbReference type="PANTHER" id="PTHR21060:SF15">
    <property type="entry name" value="ACETATE KINASE-RELATED"/>
    <property type="match status" value="1"/>
</dbReference>
<dbReference type="Pfam" id="PF00871">
    <property type="entry name" value="Acetate_kinase"/>
    <property type="match status" value="1"/>
</dbReference>
<dbReference type="PIRSF" id="PIRSF000722">
    <property type="entry name" value="Acetate_prop_kin"/>
    <property type="match status" value="1"/>
</dbReference>
<dbReference type="PRINTS" id="PR00471">
    <property type="entry name" value="ACETATEKNASE"/>
</dbReference>
<dbReference type="SUPFAM" id="SSF53067">
    <property type="entry name" value="Actin-like ATPase domain"/>
    <property type="match status" value="2"/>
</dbReference>
<dbReference type="PROSITE" id="PS01075">
    <property type="entry name" value="ACETATE_KINASE_1"/>
    <property type="match status" value="1"/>
</dbReference>
<dbReference type="PROSITE" id="PS01076">
    <property type="entry name" value="ACETATE_KINASE_2"/>
    <property type="match status" value="1"/>
</dbReference>
<keyword id="KW-0067">ATP-binding</keyword>
<keyword id="KW-0963">Cytoplasm</keyword>
<keyword id="KW-0418">Kinase</keyword>
<keyword id="KW-0460">Magnesium</keyword>
<keyword id="KW-0479">Metal-binding</keyword>
<keyword id="KW-0547">Nucleotide-binding</keyword>
<keyword id="KW-0808">Transferase</keyword>
<name>ACKA_HELAH</name>
<gene>
    <name evidence="1" type="primary">ackA</name>
    <name type="ordered locus">Hac_1289</name>
</gene>
<comment type="function">
    <text evidence="1">Catalyzes the formation of acetyl phosphate from acetate and ATP. Can also catalyze the reverse reaction.</text>
</comment>
<comment type="catalytic activity">
    <reaction evidence="1">
        <text>acetate + ATP = acetyl phosphate + ADP</text>
        <dbReference type="Rhea" id="RHEA:11352"/>
        <dbReference type="ChEBI" id="CHEBI:22191"/>
        <dbReference type="ChEBI" id="CHEBI:30089"/>
        <dbReference type="ChEBI" id="CHEBI:30616"/>
        <dbReference type="ChEBI" id="CHEBI:456216"/>
        <dbReference type="EC" id="2.7.2.1"/>
    </reaction>
</comment>
<comment type="cofactor">
    <cofactor evidence="1">
        <name>Mg(2+)</name>
        <dbReference type="ChEBI" id="CHEBI:18420"/>
    </cofactor>
    <cofactor evidence="1">
        <name>Mn(2+)</name>
        <dbReference type="ChEBI" id="CHEBI:29035"/>
    </cofactor>
    <text evidence="1">Mg(2+). Can also accept Mn(2+).</text>
</comment>
<comment type="pathway">
    <text evidence="1">Metabolic intermediate biosynthesis; acetyl-CoA biosynthesis; acetyl-CoA from acetate: step 1/2.</text>
</comment>
<comment type="subunit">
    <text evidence="1">Homodimer.</text>
</comment>
<comment type="subcellular location">
    <subcellularLocation>
        <location evidence="1">Cytoplasm</location>
    </subcellularLocation>
</comment>
<comment type="similarity">
    <text evidence="1">Belongs to the acetokinase family.</text>
</comment>
<protein>
    <recommendedName>
        <fullName evidence="1">Acetate kinase</fullName>
        <ecNumber evidence="1">2.7.2.1</ecNumber>
    </recommendedName>
    <alternativeName>
        <fullName evidence="1">Acetokinase</fullName>
    </alternativeName>
</protein>
<organism>
    <name type="scientific">Helicobacter acinonychis (strain Sheeba)</name>
    <dbReference type="NCBI Taxonomy" id="382638"/>
    <lineage>
        <taxon>Bacteria</taxon>
        <taxon>Pseudomonadati</taxon>
        <taxon>Campylobacterota</taxon>
        <taxon>Epsilonproteobacteria</taxon>
        <taxon>Campylobacterales</taxon>
        <taxon>Helicobacteraceae</taxon>
        <taxon>Helicobacter</taxon>
    </lineage>
</organism>
<sequence length="400" mass="44581">MEILVLNLGSSSIKFKLFDMKENKPLASGLIERIGEEVGQLKIQSHLHHDKQEVKKQLFIKDHASGLLMVREHLTKMGIIKDFDKIDAIGHRVVQGGDKFHAPVLVDEKVMQEIERLSILAPLHNPVNLAGIKFVKTAHPHIPQIAVFDTAFHATMPDFAYMYALPYELYEKYQIRRYGFHGTSHHYVAKEAAKYLHIPYHKFNAITLHLGNGASVAAIKDGKSVDTSMGLTPLEGLIMGTRCGDIDPTVVEYIAQCANKSLEEVMKILNYESGLKGICGDNDARNIETRAKKGDKQAKLAFEMCAYRIKKHIGAYMVALGRVDAIIFTGGMGENYPALRESVCEGLEKLGIALHKPTNDNPGSGIVDLSQPNTKIQVLRIPTDEELEIALQTKRVLEKH</sequence>
<accession>Q17WE3</accession>
<feature type="chain" id="PRO_1000002237" description="Acetate kinase">
    <location>
        <begin position="1"/>
        <end position="400"/>
    </location>
</feature>
<feature type="active site" description="Proton donor/acceptor" evidence="1">
    <location>
        <position position="149"/>
    </location>
</feature>
<feature type="binding site" evidence="1">
    <location>
        <position position="7"/>
    </location>
    <ligand>
        <name>Mg(2+)</name>
        <dbReference type="ChEBI" id="CHEBI:18420"/>
    </ligand>
</feature>
<feature type="binding site" evidence="1">
    <location>
        <position position="14"/>
    </location>
    <ligand>
        <name>ATP</name>
        <dbReference type="ChEBI" id="CHEBI:30616"/>
    </ligand>
</feature>
<feature type="binding site" evidence="1">
    <location>
        <position position="92"/>
    </location>
    <ligand>
        <name>substrate</name>
    </ligand>
</feature>
<feature type="binding site" evidence="1">
    <location>
        <begin position="209"/>
        <end position="213"/>
    </location>
    <ligand>
        <name>ATP</name>
        <dbReference type="ChEBI" id="CHEBI:30616"/>
    </ligand>
</feature>
<feature type="binding site" evidence="1">
    <location>
        <begin position="283"/>
        <end position="285"/>
    </location>
    <ligand>
        <name>ATP</name>
        <dbReference type="ChEBI" id="CHEBI:30616"/>
    </ligand>
</feature>
<feature type="binding site" evidence="1">
    <location>
        <begin position="331"/>
        <end position="335"/>
    </location>
    <ligand>
        <name>ATP</name>
        <dbReference type="ChEBI" id="CHEBI:30616"/>
    </ligand>
</feature>
<feature type="binding site" evidence="1">
    <location>
        <position position="385"/>
    </location>
    <ligand>
        <name>Mg(2+)</name>
        <dbReference type="ChEBI" id="CHEBI:18420"/>
    </ligand>
</feature>
<feature type="site" description="Transition state stabilizer" evidence="1">
    <location>
        <position position="181"/>
    </location>
</feature>
<feature type="site" description="Transition state stabilizer" evidence="1">
    <location>
        <position position="242"/>
    </location>
</feature>
<proteinExistence type="inferred from homology"/>
<evidence type="ECO:0000255" key="1">
    <source>
        <dbReference type="HAMAP-Rule" id="MF_00020"/>
    </source>
</evidence>